<feature type="chain" id="PRO_0000116580" description="Uncharacterized protein C22H10.06c">
    <location>
        <begin position="1"/>
        <end position="93"/>
    </location>
</feature>
<name>YD46_SCHPO</name>
<sequence>MSCRYRICRDIWRGKCIYVFRCLYTNHAVVSWNQTNEVIGLYKANEHKFMNNRKQSHIKNGLVVSYSILYPVGKGRSLRSTGVVLILGPVKEY</sequence>
<protein>
    <recommendedName>
        <fullName>Uncharacterized protein C22H10.06c</fullName>
    </recommendedName>
</protein>
<gene>
    <name type="ORF">SPAC22H10.06c</name>
</gene>
<organism>
    <name type="scientific">Schizosaccharomyces pombe (strain 972 / ATCC 24843)</name>
    <name type="common">Fission yeast</name>
    <dbReference type="NCBI Taxonomy" id="284812"/>
    <lineage>
        <taxon>Eukaryota</taxon>
        <taxon>Fungi</taxon>
        <taxon>Dikarya</taxon>
        <taxon>Ascomycota</taxon>
        <taxon>Taphrinomycotina</taxon>
        <taxon>Schizosaccharomycetes</taxon>
        <taxon>Schizosaccharomycetales</taxon>
        <taxon>Schizosaccharomycetaceae</taxon>
        <taxon>Schizosaccharomyces</taxon>
    </lineage>
</organism>
<dbReference type="EMBL" id="CU329670">
    <property type="protein sequence ID" value="CAA93607.1"/>
    <property type="molecule type" value="Genomic_DNA"/>
</dbReference>
<dbReference type="PIR" id="T38208">
    <property type="entry name" value="T38208"/>
</dbReference>
<dbReference type="RefSeq" id="NP_593742.1">
    <property type="nucleotide sequence ID" value="NM_001019173.1"/>
</dbReference>
<dbReference type="PaxDb" id="4896-SPAC22H10.06c.1"/>
<dbReference type="EnsemblFungi" id="SPAC22H10.06c.1">
    <property type="protein sequence ID" value="SPAC22H10.06c.1:pep"/>
    <property type="gene ID" value="SPAC22H10.06c"/>
</dbReference>
<dbReference type="KEGG" id="spo:2541880"/>
<dbReference type="PomBase" id="SPAC22H10.06c"/>
<dbReference type="VEuPathDB" id="FungiDB:SPAC22H10.06c"/>
<dbReference type="HOGENOM" id="CLU_2400940_0_0_1"/>
<dbReference type="InParanoid" id="Q10300"/>
<dbReference type="PRO" id="PR:Q10300"/>
<dbReference type="Proteomes" id="UP000002485">
    <property type="component" value="Chromosome I"/>
</dbReference>
<proteinExistence type="predicted"/>
<reference key="1">
    <citation type="journal article" date="2002" name="Nature">
        <title>The genome sequence of Schizosaccharomyces pombe.</title>
        <authorList>
            <person name="Wood V."/>
            <person name="Gwilliam R."/>
            <person name="Rajandream M.A."/>
            <person name="Lyne M.H."/>
            <person name="Lyne R."/>
            <person name="Stewart A."/>
            <person name="Sgouros J.G."/>
            <person name="Peat N."/>
            <person name="Hayles J."/>
            <person name="Baker S.G."/>
            <person name="Basham D."/>
            <person name="Bowman S."/>
            <person name="Brooks K."/>
            <person name="Brown D."/>
            <person name="Brown S."/>
            <person name="Chillingworth T."/>
            <person name="Churcher C.M."/>
            <person name="Collins M."/>
            <person name="Connor R."/>
            <person name="Cronin A."/>
            <person name="Davis P."/>
            <person name="Feltwell T."/>
            <person name="Fraser A."/>
            <person name="Gentles S."/>
            <person name="Goble A."/>
            <person name="Hamlin N."/>
            <person name="Harris D.E."/>
            <person name="Hidalgo J."/>
            <person name="Hodgson G."/>
            <person name="Holroyd S."/>
            <person name="Hornsby T."/>
            <person name="Howarth S."/>
            <person name="Huckle E.J."/>
            <person name="Hunt S."/>
            <person name="Jagels K."/>
            <person name="James K.D."/>
            <person name="Jones L."/>
            <person name="Jones M."/>
            <person name="Leather S."/>
            <person name="McDonald S."/>
            <person name="McLean J."/>
            <person name="Mooney P."/>
            <person name="Moule S."/>
            <person name="Mungall K.L."/>
            <person name="Murphy L.D."/>
            <person name="Niblett D."/>
            <person name="Odell C."/>
            <person name="Oliver K."/>
            <person name="O'Neil S."/>
            <person name="Pearson D."/>
            <person name="Quail M.A."/>
            <person name="Rabbinowitsch E."/>
            <person name="Rutherford K.M."/>
            <person name="Rutter S."/>
            <person name="Saunders D."/>
            <person name="Seeger K."/>
            <person name="Sharp S."/>
            <person name="Skelton J."/>
            <person name="Simmonds M.N."/>
            <person name="Squares R."/>
            <person name="Squares S."/>
            <person name="Stevens K."/>
            <person name="Taylor K."/>
            <person name="Taylor R.G."/>
            <person name="Tivey A."/>
            <person name="Walsh S.V."/>
            <person name="Warren T."/>
            <person name="Whitehead S."/>
            <person name="Woodward J.R."/>
            <person name="Volckaert G."/>
            <person name="Aert R."/>
            <person name="Robben J."/>
            <person name="Grymonprez B."/>
            <person name="Weltjens I."/>
            <person name="Vanstreels E."/>
            <person name="Rieger M."/>
            <person name="Schaefer M."/>
            <person name="Mueller-Auer S."/>
            <person name="Gabel C."/>
            <person name="Fuchs M."/>
            <person name="Duesterhoeft A."/>
            <person name="Fritzc C."/>
            <person name="Holzer E."/>
            <person name="Moestl D."/>
            <person name="Hilbert H."/>
            <person name="Borzym K."/>
            <person name="Langer I."/>
            <person name="Beck A."/>
            <person name="Lehrach H."/>
            <person name="Reinhardt R."/>
            <person name="Pohl T.M."/>
            <person name="Eger P."/>
            <person name="Zimmermann W."/>
            <person name="Wedler H."/>
            <person name="Wambutt R."/>
            <person name="Purnelle B."/>
            <person name="Goffeau A."/>
            <person name="Cadieu E."/>
            <person name="Dreano S."/>
            <person name="Gloux S."/>
            <person name="Lelaure V."/>
            <person name="Mottier S."/>
            <person name="Galibert F."/>
            <person name="Aves S.J."/>
            <person name="Xiang Z."/>
            <person name="Hunt C."/>
            <person name="Moore K."/>
            <person name="Hurst S.M."/>
            <person name="Lucas M."/>
            <person name="Rochet M."/>
            <person name="Gaillardin C."/>
            <person name="Tallada V.A."/>
            <person name="Garzon A."/>
            <person name="Thode G."/>
            <person name="Daga R.R."/>
            <person name="Cruzado L."/>
            <person name="Jimenez J."/>
            <person name="Sanchez M."/>
            <person name="del Rey F."/>
            <person name="Benito J."/>
            <person name="Dominguez A."/>
            <person name="Revuelta J.L."/>
            <person name="Moreno S."/>
            <person name="Armstrong J."/>
            <person name="Forsburg S.L."/>
            <person name="Cerutti L."/>
            <person name="Lowe T."/>
            <person name="McCombie W.R."/>
            <person name="Paulsen I."/>
            <person name="Potashkin J."/>
            <person name="Shpakovski G.V."/>
            <person name="Ussery D."/>
            <person name="Barrell B.G."/>
            <person name="Nurse P."/>
        </authorList>
    </citation>
    <scope>NUCLEOTIDE SEQUENCE [LARGE SCALE GENOMIC DNA]</scope>
    <source>
        <strain>972 / ATCC 24843</strain>
    </source>
</reference>
<keyword id="KW-1185">Reference proteome</keyword>
<accession>Q10300</accession>